<keyword id="KW-0028">Amino-acid biosynthesis</keyword>
<keyword id="KW-0067">ATP-binding</keyword>
<keyword id="KW-0963">Cytoplasm</keyword>
<keyword id="KW-0328">Glycosyltransferase</keyword>
<keyword id="KW-0368">Histidine biosynthesis</keyword>
<keyword id="KW-0547">Nucleotide-binding</keyword>
<keyword id="KW-1185">Reference proteome</keyword>
<keyword id="KW-0808">Transferase</keyword>
<accession>A9KNX6</accession>
<evidence type="ECO:0000255" key="1">
    <source>
        <dbReference type="HAMAP-Rule" id="MF_01018"/>
    </source>
</evidence>
<protein>
    <recommendedName>
        <fullName evidence="1">ATP phosphoribosyltransferase</fullName>
        <shortName evidence="1">ATP-PRT</shortName>
        <shortName evidence="1">ATP-PRTase</shortName>
        <ecNumber evidence="1">2.4.2.17</ecNumber>
    </recommendedName>
</protein>
<organism>
    <name type="scientific">Lachnoclostridium phytofermentans (strain ATCC 700394 / DSM 18823 / ISDg)</name>
    <name type="common">Clostridium phytofermentans</name>
    <dbReference type="NCBI Taxonomy" id="357809"/>
    <lineage>
        <taxon>Bacteria</taxon>
        <taxon>Bacillati</taxon>
        <taxon>Bacillota</taxon>
        <taxon>Clostridia</taxon>
        <taxon>Lachnospirales</taxon>
        <taxon>Lachnospiraceae</taxon>
    </lineage>
</organism>
<sequence>MKYITIALAKGRLAKKALEILEQIGITCDEMKDPTSRKLIFTNEELKLRFFLAKANDVPTYVEYGAADIGVVGKDTILEEGRKMYEVLDLNLGKCRMCIAGPASAKELLHHGELIRVATKYPNIAKDYFYNKKHQTVEIIKLNGSIELAPIVGLSEVIVDIVETGSTLKENGLEVLEEICPLSARVVVNQVSMKMEHERITKMINDLREVLTEAQ</sequence>
<gene>
    <name evidence="1" type="primary">hisG</name>
    <name type="ordered locus">Cphy_2786</name>
</gene>
<reference key="1">
    <citation type="submission" date="2007-11" db="EMBL/GenBank/DDBJ databases">
        <title>Complete genome sequence of Clostridium phytofermentans ISDg.</title>
        <authorList>
            <person name="Leschine S.B."/>
            <person name="Warnick T.A."/>
            <person name="Blanchard J.L."/>
            <person name="Schnell D.J."/>
            <person name="Petit E.L."/>
            <person name="LaTouf W.G."/>
            <person name="Copeland A."/>
            <person name="Lucas S."/>
            <person name="Lapidus A."/>
            <person name="Barry K."/>
            <person name="Glavina del Rio T."/>
            <person name="Dalin E."/>
            <person name="Tice H."/>
            <person name="Pitluck S."/>
            <person name="Kiss H."/>
            <person name="Brettin T."/>
            <person name="Bruce D."/>
            <person name="Detter J.C."/>
            <person name="Han C."/>
            <person name="Kuske C."/>
            <person name="Schmutz J."/>
            <person name="Larimer F."/>
            <person name="Land M."/>
            <person name="Hauser L."/>
            <person name="Kyrpides N."/>
            <person name="Kim E.A."/>
            <person name="Richardson P."/>
        </authorList>
    </citation>
    <scope>NUCLEOTIDE SEQUENCE [LARGE SCALE GENOMIC DNA]</scope>
    <source>
        <strain>ATCC 700394 / DSM 18823 / ISDg</strain>
    </source>
</reference>
<dbReference type="EC" id="2.4.2.17" evidence="1"/>
<dbReference type="EMBL" id="CP000885">
    <property type="protein sequence ID" value="ABX43146.1"/>
    <property type="molecule type" value="Genomic_DNA"/>
</dbReference>
<dbReference type="RefSeq" id="WP_012200797.1">
    <property type="nucleotide sequence ID" value="NC_010001.1"/>
</dbReference>
<dbReference type="SMR" id="A9KNX6"/>
<dbReference type="STRING" id="357809.Cphy_2786"/>
<dbReference type="KEGG" id="cpy:Cphy_2786"/>
<dbReference type="eggNOG" id="COG0040">
    <property type="taxonomic scope" value="Bacteria"/>
</dbReference>
<dbReference type="HOGENOM" id="CLU_038115_2_0_9"/>
<dbReference type="OrthoDB" id="9801867at2"/>
<dbReference type="UniPathway" id="UPA00031">
    <property type="reaction ID" value="UER00006"/>
</dbReference>
<dbReference type="Proteomes" id="UP000000370">
    <property type="component" value="Chromosome"/>
</dbReference>
<dbReference type="GO" id="GO:0005737">
    <property type="term" value="C:cytoplasm"/>
    <property type="evidence" value="ECO:0007669"/>
    <property type="project" value="UniProtKB-SubCell"/>
</dbReference>
<dbReference type="GO" id="GO:0005524">
    <property type="term" value="F:ATP binding"/>
    <property type="evidence" value="ECO:0007669"/>
    <property type="project" value="UniProtKB-KW"/>
</dbReference>
<dbReference type="GO" id="GO:0003879">
    <property type="term" value="F:ATP phosphoribosyltransferase activity"/>
    <property type="evidence" value="ECO:0007669"/>
    <property type="project" value="UniProtKB-UniRule"/>
</dbReference>
<dbReference type="GO" id="GO:0000105">
    <property type="term" value="P:L-histidine biosynthetic process"/>
    <property type="evidence" value="ECO:0007669"/>
    <property type="project" value="UniProtKB-UniRule"/>
</dbReference>
<dbReference type="CDD" id="cd13595">
    <property type="entry name" value="PBP2_HisGs"/>
    <property type="match status" value="1"/>
</dbReference>
<dbReference type="FunFam" id="3.40.190.10:FF:000011">
    <property type="entry name" value="ATP phosphoribosyltransferase"/>
    <property type="match status" value="1"/>
</dbReference>
<dbReference type="Gene3D" id="3.40.190.10">
    <property type="entry name" value="Periplasmic binding protein-like II"/>
    <property type="match status" value="2"/>
</dbReference>
<dbReference type="HAMAP" id="MF_01018">
    <property type="entry name" value="HisG_Short"/>
    <property type="match status" value="1"/>
</dbReference>
<dbReference type="InterPro" id="IPR013820">
    <property type="entry name" value="ATP_PRibTrfase_cat"/>
</dbReference>
<dbReference type="InterPro" id="IPR018198">
    <property type="entry name" value="ATP_PRibTrfase_CS"/>
</dbReference>
<dbReference type="InterPro" id="IPR001348">
    <property type="entry name" value="ATP_PRibTrfase_HisG"/>
</dbReference>
<dbReference type="InterPro" id="IPR024893">
    <property type="entry name" value="ATP_PRibTrfase_HisG_short"/>
</dbReference>
<dbReference type="NCBIfam" id="TIGR00070">
    <property type="entry name" value="hisG"/>
    <property type="match status" value="1"/>
</dbReference>
<dbReference type="PANTHER" id="PTHR21403:SF8">
    <property type="entry name" value="ATP PHOSPHORIBOSYLTRANSFERASE"/>
    <property type="match status" value="1"/>
</dbReference>
<dbReference type="PANTHER" id="PTHR21403">
    <property type="entry name" value="ATP PHOSPHORIBOSYLTRANSFERASE ATP-PRTASE"/>
    <property type="match status" value="1"/>
</dbReference>
<dbReference type="Pfam" id="PF01634">
    <property type="entry name" value="HisG"/>
    <property type="match status" value="1"/>
</dbReference>
<dbReference type="SUPFAM" id="SSF53850">
    <property type="entry name" value="Periplasmic binding protein-like II"/>
    <property type="match status" value="1"/>
</dbReference>
<dbReference type="PROSITE" id="PS01316">
    <property type="entry name" value="ATP_P_PHORIBOSYLTR"/>
    <property type="match status" value="1"/>
</dbReference>
<feature type="chain" id="PRO_1000084156" description="ATP phosphoribosyltransferase">
    <location>
        <begin position="1"/>
        <end position="215"/>
    </location>
</feature>
<comment type="function">
    <text evidence="1">Catalyzes the condensation of ATP and 5-phosphoribose 1-diphosphate to form N'-(5'-phosphoribosyl)-ATP (PR-ATP). Has a crucial role in the pathway because the rate of histidine biosynthesis seems to be controlled primarily by regulation of HisG enzymatic activity.</text>
</comment>
<comment type="catalytic activity">
    <reaction evidence="1">
        <text>1-(5-phospho-beta-D-ribosyl)-ATP + diphosphate = 5-phospho-alpha-D-ribose 1-diphosphate + ATP</text>
        <dbReference type="Rhea" id="RHEA:18473"/>
        <dbReference type="ChEBI" id="CHEBI:30616"/>
        <dbReference type="ChEBI" id="CHEBI:33019"/>
        <dbReference type="ChEBI" id="CHEBI:58017"/>
        <dbReference type="ChEBI" id="CHEBI:73183"/>
        <dbReference type="EC" id="2.4.2.17"/>
    </reaction>
</comment>
<comment type="pathway">
    <text evidence="1">Amino-acid biosynthesis; L-histidine biosynthesis; L-histidine from 5-phospho-alpha-D-ribose 1-diphosphate: step 1/9.</text>
</comment>
<comment type="subunit">
    <text evidence="1">Heteromultimer composed of HisG and HisZ subunits.</text>
</comment>
<comment type="subcellular location">
    <subcellularLocation>
        <location evidence="1">Cytoplasm</location>
    </subcellularLocation>
</comment>
<comment type="domain">
    <text>Lacks the C-terminal regulatory region which is replaced by HisZ.</text>
</comment>
<comment type="similarity">
    <text evidence="1">Belongs to the ATP phosphoribosyltransferase family. Short subfamily.</text>
</comment>
<proteinExistence type="inferred from homology"/>
<name>HIS1_LACP7</name>